<proteinExistence type="inferred from homology"/>
<sequence>MVSILNTLRFLEKTSFYNCNDSITKEKIKIKHKGMSFVFYKPKHSTVVKYLSGGCIYHDDLVVLGKVTINDLKMMLFYMDLSYHGVTSSGVIYKLGSSIDRLSLNRTIVTKVNNNYNNYNNYNNYYNCYNYDDTFFDDDD</sequence>
<feature type="chain" id="PRO_0000448163" description="Protein OPG159">
    <location>
        <begin position="1"/>
        <end position="140"/>
    </location>
</feature>
<accession>P0DOS4</accession>
<accession>P33848</accession>
<organism>
    <name type="scientific">Variola virus</name>
    <dbReference type="NCBI Taxonomy" id="10255"/>
    <lineage>
        <taxon>Viruses</taxon>
        <taxon>Varidnaviria</taxon>
        <taxon>Bamfordvirae</taxon>
        <taxon>Nucleocytoviricota</taxon>
        <taxon>Pokkesviricetes</taxon>
        <taxon>Chitovirales</taxon>
        <taxon>Poxviridae</taxon>
        <taxon>Chordopoxvirinae</taxon>
        <taxon>Orthopoxvirus</taxon>
    </lineage>
</organism>
<name>PG159_VARV</name>
<comment type="similarity">
    <text evidence="1">Belongs to the orthopoxvirus OPG159 protein family.</text>
</comment>
<reference key="1">
    <citation type="journal article" date="1992" name="J. Gen. Virol.">
        <title>Nucleotide sequence of 21.8 kbp of variola major virus strain Harvey and comparison with vaccinia virus.</title>
        <authorList>
            <person name="Aguado B."/>
            <person name="Selmes I.P."/>
            <person name="Smith G.L."/>
        </authorList>
    </citation>
    <scope>NUCLEOTIDE SEQUENCE [GENOMIC DNA]</scope>
    <source>
        <strain>Harvey</strain>
    </source>
</reference>
<reference key="2">
    <citation type="journal article" date="1993" name="Nature">
        <title>Potential virulence determinants in terminal regions of variola smallpox virus genome.</title>
        <authorList>
            <person name="Massung R.F."/>
            <person name="Esposito J.J."/>
            <person name="Liu L.I."/>
            <person name="Qi J."/>
            <person name="Utterback T.R."/>
            <person name="Knight J.C."/>
            <person name="Aubin L."/>
            <person name="Yuran T.E."/>
            <person name="Parsons J.M."/>
            <person name="Loparev V.N."/>
            <person name="Selivanov N.A."/>
            <person name="Cavallaro K.F."/>
            <person name="Kerlavage A.R."/>
            <person name="Mahy B.W.J."/>
            <person name="Venter J.C."/>
        </authorList>
    </citation>
    <scope>NUCLEOTIDE SEQUENCE [GENOMIC DNA]</scope>
    <source>
        <strain>Bangladesh-1975</strain>
    </source>
</reference>
<organismHost>
    <name type="scientific">Homo sapiens</name>
    <name type="common">Human</name>
    <dbReference type="NCBI Taxonomy" id="9606"/>
</organismHost>
<evidence type="ECO:0000305" key="1"/>
<gene>
    <name type="primary">OPG159</name>
    <name type="ORF">A31R</name>
    <name type="ORF">A34R</name>
</gene>
<dbReference type="EMBL" id="L22579">
    <property type="protein sequence ID" value="AAA60886.1"/>
    <property type="molecule type" value="Genomic_DNA"/>
</dbReference>
<dbReference type="PIR" id="T28576">
    <property type="entry name" value="T28576"/>
</dbReference>
<dbReference type="RefSeq" id="NP_042182.1">
    <property type="nucleotide sequence ID" value="NC_001611.1"/>
</dbReference>
<dbReference type="GeneID" id="1486512"/>
<dbReference type="KEGG" id="vg:1486512"/>
<dbReference type="Proteomes" id="UP000119805">
    <property type="component" value="Segment"/>
</dbReference>
<dbReference type="InterPro" id="IPR008786">
    <property type="entry name" value="Poxvirus_A31"/>
</dbReference>
<dbReference type="Pfam" id="PF05771">
    <property type="entry name" value="Pox_A31"/>
    <property type="match status" value="1"/>
</dbReference>
<protein>
    <recommendedName>
        <fullName>Protein OPG159</fullName>
    </recommendedName>
</protein>